<dbReference type="EC" id="4.2.1.20"/>
<dbReference type="EMBL" id="CU329670">
    <property type="protein sequence ID" value="CAB11651.1"/>
    <property type="molecule type" value="Genomic_DNA"/>
</dbReference>
<dbReference type="EMBL" id="D89113">
    <property type="protein sequence ID" value="BAA13775.1"/>
    <property type="molecule type" value="mRNA"/>
</dbReference>
<dbReference type="PIR" id="T37946">
    <property type="entry name" value="T37946"/>
</dbReference>
<dbReference type="PIR" id="T42090">
    <property type="entry name" value="T42090"/>
</dbReference>
<dbReference type="RefSeq" id="NP_593777.1">
    <property type="nucleotide sequence ID" value="NM_001019206.2"/>
</dbReference>
<dbReference type="SMR" id="O13831"/>
<dbReference type="BioGRID" id="278712">
    <property type="interactions" value="5"/>
</dbReference>
<dbReference type="FunCoup" id="O13831">
    <property type="interactions" value="497"/>
</dbReference>
<dbReference type="STRING" id="284812.O13831"/>
<dbReference type="iPTMnet" id="O13831"/>
<dbReference type="PaxDb" id="4896-SPAC19A8.15.1"/>
<dbReference type="EnsemblFungi" id="SPAC19A8.15.1">
    <property type="protein sequence ID" value="SPAC19A8.15.1:pep"/>
    <property type="gene ID" value="SPAC19A8.15"/>
</dbReference>
<dbReference type="GeneID" id="2542240"/>
<dbReference type="KEGG" id="spo:2542240"/>
<dbReference type="PomBase" id="SPAC19A8.15">
    <property type="gene designation" value="trp2"/>
</dbReference>
<dbReference type="VEuPathDB" id="FungiDB:SPAC19A8.15"/>
<dbReference type="eggNOG" id="KOG1395">
    <property type="taxonomic scope" value="Eukaryota"/>
</dbReference>
<dbReference type="eggNOG" id="KOG4175">
    <property type="taxonomic scope" value="Eukaryota"/>
</dbReference>
<dbReference type="HOGENOM" id="CLU_016734_1_1_1"/>
<dbReference type="InParanoid" id="O13831"/>
<dbReference type="OMA" id="VDTARHS"/>
<dbReference type="PhylomeDB" id="O13831"/>
<dbReference type="UniPathway" id="UPA00035">
    <property type="reaction ID" value="UER00044"/>
</dbReference>
<dbReference type="PRO" id="PR:O13831"/>
<dbReference type="Proteomes" id="UP000002485">
    <property type="component" value="Chromosome I"/>
</dbReference>
<dbReference type="GO" id="GO:0005737">
    <property type="term" value="C:cytoplasm"/>
    <property type="evidence" value="ECO:0000318"/>
    <property type="project" value="GO_Central"/>
</dbReference>
<dbReference type="GO" id="GO:0005829">
    <property type="term" value="C:cytosol"/>
    <property type="evidence" value="ECO:0007005"/>
    <property type="project" value="PomBase"/>
</dbReference>
<dbReference type="GO" id="GO:0005634">
    <property type="term" value="C:nucleus"/>
    <property type="evidence" value="ECO:0007005"/>
    <property type="project" value="PomBase"/>
</dbReference>
<dbReference type="GO" id="GO:0004834">
    <property type="term" value="F:tryptophan synthase activity"/>
    <property type="evidence" value="ECO:0007669"/>
    <property type="project" value="UniProtKB-EC"/>
</dbReference>
<dbReference type="GO" id="GO:0000162">
    <property type="term" value="P:L-tryptophan biosynthetic process"/>
    <property type="evidence" value="ECO:0000318"/>
    <property type="project" value="GO_Central"/>
</dbReference>
<dbReference type="CDD" id="cd06446">
    <property type="entry name" value="Trp-synth_B"/>
    <property type="match status" value="1"/>
</dbReference>
<dbReference type="CDD" id="cd04724">
    <property type="entry name" value="Tryptophan_synthase_alpha"/>
    <property type="match status" value="1"/>
</dbReference>
<dbReference type="FunFam" id="3.20.20.70:FF:000151">
    <property type="entry name" value="Tryptophan synthase"/>
    <property type="match status" value="1"/>
</dbReference>
<dbReference type="FunFam" id="3.40.50.1100:FF:000001">
    <property type="entry name" value="Tryptophan synthase beta chain"/>
    <property type="match status" value="1"/>
</dbReference>
<dbReference type="FunFam" id="3.40.50.1100:FF:000004">
    <property type="entry name" value="Tryptophan synthase beta chain"/>
    <property type="match status" value="1"/>
</dbReference>
<dbReference type="Gene3D" id="3.40.50.1100">
    <property type="match status" value="2"/>
</dbReference>
<dbReference type="Gene3D" id="3.20.20.70">
    <property type="entry name" value="Aldolase class I"/>
    <property type="match status" value="1"/>
</dbReference>
<dbReference type="HAMAP" id="MF_00131">
    <property type="entry name" value="Trp_synth_alpha"/>
    <property type="match status" value="1"/>
</dbReference>
<dbReference type="HAMAP" id="MF_00133">
    <property type="entry name" value="Trp_synth_beta"/>
    <property type="match status" value="1"/>
</dbReference>
<dbReference type="InterPro" id="IPR013785">
    <property type="entry name" value="Aldolase_TIM"/>
</dbReference>
<dbReference type="InterPro" id="IPR011060">
    <property type="entry name" value="RibuloseP-bd_barrel"/>
</dbReference>
<dbReference type="InterPro" id="IPR006653">
    <property type="entry name" value="Trp_synth_b_CS"/>
</dbReference>
<dbReference type="InterPro" id="IPR006654">
    <property type="entry name" value="Trp_synth_beta"/>
</dbReference>
<dbReference type="InterPro" id="IPR023026">
    <property type="entry name" value="Trp_synth_beta/beta-like"/>
</dbReference>
<dbReference type="InterPro" id="IPR018204">
    <property type="entry name" value="Trp_synthase_alpha_AS"/>
</dbReference>
<dbReference type="InterPro" id="IPR002028">
    <property type="entry name" value="Trp_synthase_suA"/>
</dbReference>
<dbReference type="InterPro" id="IPR001926">
    <property type="entry name" value="TrpB-like_PALP"/>
</dbReference>
<dbReference type="InterPro" id="IPR036052">
    <property type="entry name" value="TrpB-like_PALP_sf"/>
</dbReference>
<dbReference type="NCBIfam" id="TIGR00262">
    <property type="entry name" value="trpA"/>
    <property type="match status" value="1"/>
</dbReference>
<dbReference type="NCBIfam" id="TIGR00263">
    <property type="entry name" value="trpB"/>
    <property type="match status" value="1"/>
</dbReference>
<dbReference type="PANTHER" id="PTHR48077:SF3">
    <property type="entry name" value="TRYPTOPHAN SYNTHASE"/>
    <property type="match status" value="1"/>
</dbReference>
<dbReference type="PANTHER" id="PTHR48077">
    <property type="entry name" value="TRYPTOPHAN SYNTHASE-RELATED"/>
    <property type="match status" value="1"/>
</dbReference>
<dbReference type="Pfam" id="PF00291">
    <property type="entry name" value="PALP"/>
    <property type="match status" value="1"/>
</dbReference>
<dbReference type="Pfam" id="PF00290">
    <property type="entry name" value="Trp_syntA"/>
    <property type="match status" value="1"/>
</dbReference>
<dbReference type="SUPFAM" id="SSF51366">
    <property type="entry name" value="Ribulose-phoshate binding barrel"/>
    <property type="match status" value="1"/>
</dbReference>
<dbReference type="SUPFAM" id="SSF53686">
    <property type="entry name" value="Tryptophan synthase beta subunit-like PLP-dependent enzymes"/>
    <property type="match status" value="1"/>
</dbReference>
<dbReference type="PROSITE" id="PS00167">
    <property type="entry name" value="TRP_SYNTHASE_ALPHA"/>
    <property type="match status" value="1"/>
</dbReference>
<dbReference type="PROSITE" id="PS00168">
    <property type="entry name" value="TRP_SYNTHASE_BETA"/>
    <property type="match status" value="1"/>
</dbReference>
<accession>O13831</accession>
<accession>P78765</accession>
<organism>
    <name type="scientific">Schizosaccharomyces pombe (strain 972 / ATCC 24843)</name>
    <name type="common">Fission yeast</name>
    <dbReference type="NCBI Taxonomy" id="284812"/>
    <lineage>
        <taxon>Eukaryota</taxon>
        <taxon>Fungi</taxon>
        <taxon>Dikarya</taxon>
        <taxon>Ascomycota</taxon>
        <taxon>Taphrinomycotina</taxon>
        <taxon>Schizosaccharomycetes</taxon>
        <taxon>Schizosaccharomycetales</taxon>
        <taxon>Schizosaccharomycetaceae</taxon>
        <taxon>Schizosaccharomyces</taxon>
    </lineage>
</organism>
<reference key="1">
    <citation type="journal article" date="2002" name="Nature">
        <title>The genome sequence of Schizosaccharomyces pombe.</title>
        <authorList>
            <person name="Wood V."/>
            <person name="Gwilliam R."/>
            <person name="Rajandream M.A."/>
            <person name="Lyne M.H."/>
            <person name="Lyne R."/>
            <person name="Stewart A."/>
            <person name="Sgouros J.G."/>
            <person name="Peat N."/>
            <person name="Hayles J."/>
            <person name="Baker S.G."/>
            <person name="Basham D."/>
            <person name="Bowman S."/>
            <person name="Brooks K."/>
            <person name="Brown D."/>
            <person name="Brown S."/>
            <person name="Chillingworth T."/>
            <person name="Churcher C.M."/>
            <person name="Collins M."/>
            <person name="Connor R."/>
            <person name="Cronin A."/>
            <person name="Davis P."/>
            <person name="Feltwell T."/>
            <person name="Fraser A."/>
            <person name="Gentles S."/>
            <person name="Goble A."/>
            <person name="Hamlin N."/>
            <person name="Harris D.E."/>
            <person name="Hidalgo J."/>
            <person name="Hodgson G."/>
            <person name="Holroyd S."/>
            <person name="Hornsby T."/>
            <person name="Howarth S."/>
            <person name="Huckle E.J."/>
            <person name="Hunt S."/>
            <person name="Jagels K."/>
            <person name="James K.D."/>
            <person name="Jones L."/>
            <person name="Jones M."/>
            <person name="Leather S."/>
            <person name="McDonald S."/>
            <person name="McLean J."/>
            <person name="Mooney P."/>
            <person name="Moule S."/>
            <person name="Mungall K.L."/>
            <person name="Murphy L.D."/>
            <person name="Niblett D."/>
            <person name="Odell C."/>
            <person name="Oliver K."/>
            <person name="O'Neil S."/>
            <person name="Pearson D."/>
            <person name="Quail M.A."/>
            <person name="Rabbinowitsch E."/>
            <person name="Rutherford K.M."/>
            <person name="Rutter S."/>
            <person name="Saunders D."/>
            <person name="Seeger K."/>
            <person name="Sharp S."/>
            <person name="Skelton J."/>
            <person name="Simmonds M.N."/>
            <person name="Squares R."/>
            <person name="Squares S."/>
            <person name="Stevens K."/>
            <person name="Taylor K."/>
            <person name="Taylor R.G."/>
            <person name="Tivey A."/>
            <person name="Walsh S.V."/>
            <person name="Warren T."/>
            <person name="Whitehead S."/>
            <person name="Woodward J.R."/>
            <person name="Volckaert G."/>
            <person name="Aert R."/>
            <person name="Robben J."/>
            <person name="Grymonprez B."/>
            <person name="Weltjens I."/>
            <person name="Vanstreels E."/>
            <person name="Rieger M."/>
            <person name="Schaefer M."/>
            <person name="Mueller-Auer S."/>
            <person name="Gabel C."/>
            <person name="Fuchs M."/>
            <person name="Duesterhoeft A."/>
            <person name="Fritzc C."/>
            <person name="Holzer E."/>
            <person name="Moestl D."/>
            <person name="Hilbert H."/>
            <person name="Borzym K."/>
            <person name="Langer I."/>
            <person name="Beck A."/>
            <person name="Lehrach H."/>
            <person name="Reinhardt R."/>
            <person name="Pohl T.M."/>
            <person name="Eger P."/>
            <person name="Zimmermann W."/>
            <person name="Wedler H."/>
            <person name="Wambutt R."/>
            <person name="Purnelle B."/>
            <person name="Goffeau A."/>
            <person name="Cadieu E."/>
            <person name="Dreano S."/>
            <person name="Gloux S."/>
            <person name="Lelaure V."/>
            <person name="Mottier S."/>
            <person name="Galibert F."/>
            <person name="Aves S.J."/>
            <person name="Xiang Z."/>
            <person name="Hunt C."/>
            <person name="Moore K."/>
            <person name="Hurst S.M."/>
            <person name="Lucas M."/>
            <person name="Rochet M."/>
            <person name="Gaillardin C."/>
            <person name="Tallada V.A."/>
            <person name="Garzon A."/>
            <person name="Thode G."/>
            <person name="Daga R.R."/>
            <person name="Cruzado L."/>
            <person name="Jimenez J."/>
            <person name="Sanchez M."/>
            <person name="del Rey F."/>
            <person name="Benito J."/>
            <person name="Dominguez A."/>
            <person name="Revuelta J.L."/>
            <person name="Moreno S."/>
            <person name="Armstrong J."/>
            <person name="Forsburg S.L."/>
            <person name="Cerutti L."/>
            <person name="Lowe T."/>
            <person name="McCombie W.R."/>
            <person name="Paulsen I."/>
            <person name="Potashkin J."/>
            <person name="Shpakovski G.V."/>
            <person name="Ussery D."/>
            <person name="Barrell B.G."/>
            <person name="Nurse P."/>
        </authorList>
    </citation>
    <scope>NUCLEOTIDE SEQUENCE [LARGE SCALE GENOMIC DNA]</scope>
    <source>
        <strain>972 / ATCC 24843</strain>
    </source>
</reference>
<reference key="2">
    <citation type="journal article" date="1997" name="DNA Res.">
        <title>Identification of open reading frames in Schizosaccharomyces pombe cDNAs.</title>
        <authorList>
            <person name="Yoshioka S."/>
            <person name="Kato K."/>
            <person name="Nakai K."/>
            <person name="Okayama H."/>
            <person name="Nojima H."/>
        </authorList>
    </citation>
    <scope>NUCLEOTIDE SEQUENCE [LARGE SCALE MRNA] OF 261-679</scope>
    <source>
        <strain>PR745</strain>
    </source>
</reference>
<sequence length="697" mass="75437">MTEQIKKTFLKAKEENKNVLVTFVTCGFPNVDETIKIMQGLQNGGAGIIELGIPFSDAVADGPTICKGNEIALKNNITLEKVFETVKLARDAGVTIPIILMGYYNPIFSYGDAKTIQKAKEVGANGFIIVDLPPEEAVGFREECKKQGVSFVPLVAPSTTDRRMELLASVADSFIYVVSRMGSTGSSATGVINTALPQLCQRVRKFAGDTPLAVGFGVNTSEHFHQVGSVSDGVVVGSKIIDLILKAEPGTAATVVEEYCKYLTKEDPSAPVPKQFQSGGSVATAPPAAVVEPINEMYLPQKYGMFGGMYVPEALTQCLVELESVFYKALHDEKFWEEFRSYYEYMGRPSALDYAKRLTEYCGGAHIWLKREDLNHGGSHKINNCIGQILLAKRLGKNRIIAETGAGQHGVATAICAAKFGMKCTIYMGAEDCRRQALNVFRIRLLGAEVVPVTSGTQTLRDAVNEALKAWVEQIDTTHYLIGSAIGPHPFPTIVKTFQSVIGEETKAQMQEKRKKLPDAVVACVGGGSNSIGMFSPFKADKSVMMLGCEAGGDGVDTPKHSATLTMGKVGVFHGVRTYVLQREDGQIQDTHSISAGLDYPGVGPELSELKYTNRAEFIAVTDAQCLEGFRALCHLEGIIPALESSHAVYGGMELAKKLPKDKDIVITISGRGDKDVQSVAEQLPILGPKIGWDLRF</sequence>
<keyword id="KW-0028">Amino-acid biosynthesis</keyword>
<keyword id="KW-0057">Aromatic amino acid biosynthesis</keyword>
<keyword id="KW-0456">Lyase</keyword>
<keyword id="KW-0663">Pyridoxal phosphate</keyword>
<keyword id="KW-1185">Reference proteome</keyword>
<keyword id="KW-0822">Tryptophan biosynthesis</keyword>
<evidence type="ECO:0000250" key="1"/>
<evidence type="ECO:0000305" key="2"/>
<gene>
    <name type="primary">trp2</name>
    <name type="ORF">SPAC19A8.15</name>
</gene>
<protein>
    <recommendedName>
        <fullName>Tryptophan synthase</fullName>
        <ecNumber>4.2.1.20</ecNumber>
    </recommendedName>
</protein>
<proteinExistence type="evidence at transcript level"/>
<comment type="catalytic activity">
    <reaction>
        <text>(1S,2R)-1-C-(indol-3-yl)glycerol 3-phosphate + L-serine = D-glyceraldehyde 3-phosphate + L-tryptophan + H2O</text>
        <dbReference type="Rhea" id="RHEA:10532"/>
        <dbReference type="ChEBI" id="CHEBI:15377"/>
        <dbReference type="ChEBI" id="CHEBI:33384"/>
        <dbReference type="ChEBI" id="CHEBI:57912"/>
        <dbReference type="ChEBI" id="CHEBI:58866"/>
        <dbReference type="ChEBI" id="CHEBI:59776"/>
        <dbReference type="EC" id="4.2.1.20"/>
    </reaction>
</comment>
<comment type="cofactor">
    <cofactor>
        <name>pyridoxal 5'-phosphate</name>
        <dbReference type="ChEBI" id="CHEBI:597326"/>
    </cofactor>
</comment>
<comment type="pathway">
    <text>Amino-acid biosynthesis; L-tryptophan biosynthesis; L-tryptophan from chorismate: step 5/5.</text>
</comment>
<comment type="similarity">
    <text evidence="2">In the N-terminal section; belongs to the TrpA family.</text>
</comment>
<comment type="similarity">
    <text evidence="2">In the C-terminal section; belongs to the TrpB family.</text>
</comment>
<feature type="chain" id="PRO_0000098725" description="Tryptophan synthase">
    <location>
        <begin position="1"/>
        <end position="697"/>
    </location>
</feature>
<feature type="region of interest" description="Tryptophan synthase alpha chain">
    <location>
        <begin position="1"/>
        <end position="298"/>
    </location>
</feature>
<feature type="region of interest" description="Tryptophan synthase beta chain">
    <location>
        <begin position="298"/>
        <end position="697"/>
    </location>
</feature>
<feature type="active site" description="Proton acceptor" evidence="1">
    <location>
        <position position="50"/>
    </location>
</feature>
<feature type="active site" description="Proton acceptor" evidence="1">
    <location>
        <position position="61"/>
    </location>
</feature>
<feature type="modified residue" description="N6-(pyridoxal phosphate)lysine" evidence="1">
    <location>
        <position position="381"/>
    </location>
</feature>
<feature type="sequence conflict" description="In Ref. 2." evidence="2" ref="2">
    <original>A</original>
    <variation>P</variation>
    <location>
        <position position="417"/>
    </location>
</feature>
<feature type="sequence conflict" description="In Ref. 2." evidence="2" ref="2">
    <original>FGMKCTIYMGAEDCRR</original>
    <variation>IWYEMYYPTWVQKIVVV</variation>
    <location>
        <begin position="420"/>
        <end position="435"/>
    </location>
</feature>
<feature type="sequence conflict" description="In Ref. 2; BAA13775." evidence="2" ref="2">
    <original>I</original>
    <variation>T</variation>
    <location>
        <position position="482"/>
    </location>
</feature>
<feature type="sequence conflict" description="In Ref. 2." evidence="2" ref="2">
    <original>SGRGDKDVQS</original>
    <variation>QVVVTRMFKA</variation>
    <location>
        <begin position="670"/>
        <end position="679"/>
    </location>
</feature>
<name>TRP_SCHPO</name>